<feature type="chain" id="PRO_0000405451" description="Cytochrome c oxidase assembly factor 3, mitochondrial">
    <location>
        <begin position="1"/>
        <end position="84"/>
    </location>
</feature>
<feature type="topological domain" description="Mitochondrial matrix" evidence="1">
    <location>
        <begin position="1"/>
        <end position="30"/>
    </location>
</feature>
<feature type="transmembrane region" description="Helical" evidence="2">
    <location>
        <begin position="31"/>
        <end position="50"/>
    </location>
</feature>
<feature type="topological domain" description="Mitochondrial intermembrane" evidence="1">
    <location>
        <begin position="51"/>
        <end position="84"/>
    </location>
</feature>
<gene>
    <name type="primary">COA3</name>
    <name type="ORF">Kpol_1027p21</name>
</gene>
<comment type="function">
    <text evidence="1">Required for assembly of cytochrome c oxidase (complex IV).</text>
</comment>
<comment type="subunit">
    <text evidence="1">Component of 250-400 kDa complexes called cytochrome oxidase assembly intermediates or COA complexes.</text>
</comment>
<comment type="subcellular location">
    <subcellularLocation>
        <location>Mitochondrion inner membrane</location>
        <topology>Single-pass membrane protein</topology>
    </subcellularLocation>
</comment>
<comment type="similarity">
    <text evidence="3">Belongs to the COA3 family.</text>
</comment>
<organism>
    <name type="scientific">Vanderwaltozyma polyspora (strain ATCC 22028 / DSM 70294 / BCRC 21397 / CBS 2163 / NBRC 10782 / NRRL Y-8283 / UCD 57-17)</name>
    <name type="common">Kluyveromyces polysporus</name>
    <dbReference type="NCBI Taxonomy" id="436907"/>
    <lineage>
        <taxon>Eukaryota</taxon>
        <taxon>Fungi</taxon>
        <taxon>Dikarya</taxon>
        <taxon>Ascomycota</taxon>
        <taxon>Saccharomycotina</taxon>
        <taxon>Saccharomycetes</taxon>
        <taxon>Saccharomycetales</taxon>
        <taxon>Saccharomycetaceae</taxon>
        <taxon>Vanderwaltozyma</taxon>
    </lineage>
</organism>
<protein>
    <recommendedName>
        <fullName>Cytochrome c oxidase assembly factor 3, mitochondrial</fullName>
    </recommendedName>
</protein>
<sequence>MALEPSRYLDKKTWKMTPAMIRARQPYFKKNMIALGLLLGITTGVYVYTFNLSHKDNDFIDVPIPPIDEKELAVLQKEFNDKKN</sequence>
<keyword id="KW-0472">Membrane</keyword>
<keyword id="KW-0496">Mitochondrion</keyword>
<keyword id="KW-0999">Mitochondrion inner membrane</keyword>
<keyword id="KW-1185">Reference proteome</keyword>
<keyword id="KW-0812">Transmembrane</keyword>
<keyword id="KW-1133">Transmembrane helix</keyword>
<name>COA3_VANPO</name>
<proteinExistence type="inferred from homology"/>
<accession>A7TQM5</accession>
<evidence type="ECO:0000250" key="1"/>
<evidence type="ECO:0000255" key="2"/>
<evidence type="ECO:0000305" key="3"/>
<dbReference type="EMBL" id="DS480460">
    <property type="protein sequence ID" value="EDO15446.1"/>
    <property type="molecule type" value="Genomic_DNA"/>
</dbReference>
<dbReference type="RefSeq" id="XP_001643304.1">
    <property type="nucleotide sequence ID" value="XM_001643254.1"/>
</dbReference>
<dbReference type="SMR" id="A7TQM5"/>
<dbReference type="FunCoup" id="A7TQM5">
    <property type="interactions" value="40"/>
</dbReference>
<dbReference type="STRING" id="436907.A7TQM5"/>
<dbReference type="GeneID" id="5543522"/>
<dbReference type="KEGG" id="vpo:Kpol_1027p21"/>
<dbReference type="eggNOG" id="ENOG502S440">
    <property type="taxonomic scope" value="Eukaryota"/>
</dbReference>
<dbReference type="HOGENOM" id="CLU_153999_0_0_1"/>
<dbReference type="InParanoid" id="A7TQM5"/>
<dbReference type="OMA" id="WKMTPAM"/>
<dbReference type="OrthoDB" id="10018333at2759"/>
<dbReference type="PhylomeDB" id="A7TQM5"/>
<dbReference type="Proteomes" id="UP000000267">
    <property type="component" value="Unassembled WGS sequence"/>
</dbReference>
<dbReference type="GO" id="GO:0005743">
    <property type="term" value="C:mitochondrial inner membrane"/>
    <property type="evidence" value="ECO:0007669"/>
    <property type="project" value="UniProtKB-SubCell"/>
</dbReference>
<dbReference type="GO" id="GO:0033617">
    <property type="term" value="P:mitochondrial cytochrome c oxidase assembly"/>
    <property type="evidence" value="ECO:0007669"/>
    <property type="project" value="EnsemblFungi"/>
</dbReference>
<dbReference type="GO" id="GO:0070130">
    <property type="term" value="P:negative regulation of mitochondrial translation"/>
    <property type="evidence" value="ECO:0007669"/>
    <property type="project" value="EnsemblFungi"/>
</dbReference>
<dbReference type="InterPro" id="IPR041752">
    <property type="entry name" value="Coa3"/>
</dbReference>
<dbReference type="InterPro" id="IPR018628">
    <property type="entry name" value="Coa3_cc"/>
</dbReference>
<dbReference type="PANTHER" id="PTHR15642:SF3">
    <property type="entry name" value="CYTOCHROME C OXIDASE ASSEMBLY FACTOR 3 HOMOLOG, MITOCHONDRIAL"/>
    <property type="match status" value="1"/>
</dbReference>
<dbReference type="PANTHER" id="PTHR15642">
    <property type="entry name" value="CYTOCHROME C OXIDASE ASSEMBLY FACTOR 3, MITOCHONDRIAL"/>
    <property type="match status" value="1"/>
</dbReference>
<dbReference type="Pfam" id="PF09813">
    <property type="entry name" value="Coa3_cc"/>
    <property type="match status" value="1"/>
</dbReference>
<reference key="1">
    <citation type="journal article" date="2007" name="Proc. Natl. Acad. Sci. U.S.A.">
        <title>Independent sorting-out of thousands of duplicated gene pairs in two yeast species descended from a whole-genome duplication.</title>
        <authorList>
            <person name="Scannell D.R."/>
            <person name="Frank A.C."/>
            <person name="Conant G.C."/>
            <person name="Byrne K.P."/>
            <person name="Woolfit M."/>
            <person name="Wolfe K.H."/>
        </authorList>
    </citation>
    <scope>NUCLEOTIDE SEQUENCE [LARGE SCALE GENOMIC DNA]</scope>
    <source>
        <strain>ATCC 22028 / DSM 70294 / BCRC 21397 / CBS 2163 / NBRC 10782 / NRRL Y-8283 / UCD 57-17</strain>
    </source>
</reference>